<gene>
    <name evidence="1" type="primary">clpS1</name>
    <name type="ordered locus">R01486</name>
    <name type="ORF">SMc02110</name>
</gene>
<evidence type="ECO:0000255" key="1">
    <source>
        <dbReference type="HAMAP-Rule" id="MF_00302"/>
    </source>
</evidence>
<evidence type="ECO:0000256" key="2">
    <source>
        <dbReference type="SAM" id="MobiDB-lite"/>
    </source>
</evidence>
<name>CLPS1_RHIME</name>
<comment type="function">
    <text evidence="1">Involved in the modulation of the specificity of the ClpAP-mediated ATP-dependent protein degradation.</text>
</comment>
<comment type="subunit">
    <text evidence="1">Binds to the N-terminal domain of the chaperone ClpA.</text>
</comment>
<comment type="similarity">
    <text evidence="1">Belongs to the ClpS family.</text>
</comment>
<proteinExistence type="inferred from homology"/>
<protein>
    <recommendedName>
        <fullName evidence="1">ATP-dependent Clp protease adapter protein ClpS 1</fullName>
    </recommendedName>
</protein>
<keyword id="KW-1185">Reference proteome</keyword>
<accession>Q92Q63</accession>
<feature type="chain" id="PRO_0000215740" description="ATP-dependent Clp protease adapter protein ClpS 1">
    <location>
        <begin position="1"/>
        <end position="117"/>
    </location>
</feature>
<feature type="region of interest" description="Disordered" evidence="2">
    <location>
        <begin position="1"/>
        <end position="33"/>
    </location>
</feature>
<sequence length="117" mass="13357">MIAMPVRMQQGSEGDGGGPSRGTSVITRTKPKTKKPSLYRVLLLNDDYTPMEFVIHILERFFQKNREEATVIMLHVHNHGVGECGVFTYEVAETKVTQVMDFARQHQHPLQCVMEKK</sequence>
<organism>
    <name type="scientific">Rhizobium meliloti (strain 1021)</name>
    <name type="common">Ensifer meliloti</name>
    <name type="synonym">Sinorhizobium meliloti</name>
    <dbReference type="NCBI Taxonomy" id="266834"/>
    <lineage>
        <taxon>Bacteria</taxon>
        <taxon>Pseudomonadati</taxon>
        <taxon>Pseudomonadota</taxon>
        <taxon>Alphaproteobacteria</taxon>
        <taxon>Hyphomicrobiales</taxon>
        <taxon>Rhizobiaceae</taxon>
        <taxon>Sinorhizobium/Ensifer group</taxon>
        <taxon>Sinorhizobium</taxon>
    </lineage>
</organism>
<reference key="1">
    <citation type="journal article" date="2001" name="Proc. Natl. Acad. Sci. U.S.A.">
        <title>Analysis of the chromosome sequence of the legume symbiont Sinorhizobium meliloti strain 1021.</title>
        <authorList>
            <person name="Capela D."/>
            <person name="Barloy-Hubler F."/>
            <person name="Gouzy J."/>
            <person name="Bothe G."/>
            <person name="Ampe F."/>
            <person name="Batut J."/>
            <person name="Boistard P."/>
            <person name="Becker A."/>
            <person name="Boutry M."/>
            <person name="Cadieu E."/>
            <person name="Dreano S."/>
            <person name="Gloux S."/>
            <person name="Godrie T."/>
            <person name="Goffeau A."/>
            <person name="Kahn D."/>
            <person name="Kiss E."/>
            <person name="Lelaure V."/>
            <person name="Masuy D."/>
            <person name="Pohl T."/>
            <person name="Portetelle D."/>
            <person name="Puehler A."/>
            <person name="Purnelle B."/>
            <person name="Ramsperger U."/>
            <person name="Renard C."/>
            <person name="Thebault P."/>
            <person name="Vandenbol M."/>
            <person name="Weidner S."/>
            <person name="Galibert F."/>
        </authorList>
    </citation>
    <scope>NUCLEOTIDE SEQUENCE [LARGE SCALE GENOMIC DNA]</scope>
    <source>
        <strain>1021</strain>
    </source>
</reference>
<reference key="2">
    <citation type="journal article" date="2001" name="Science">
        <title>The composite genome of the legume symbiont Sinorhizobium meliloti.</title>
        <authorList>
            <person name="Galibert F."/>
            <person name="Finan T.M."/>
            <person name="Long S.R."/>
            <person name="Puehler A."/>
            <person name="Abola P."/>
            <person name="Ampe F."/>
            <person name="Barloy-Hubler F."/>
            <person name="Barnett M.J."/>
            <person name="Becker A."/>
            <person name="Boistard P."/>
            <person name="Bothe G."/>
            <person name="Boutry M."/>
            <person name="Bowser L."/>
            <person name="Buhrmester J."/>
            <person name="Cadieu E."/>
            <person name="Capela D."/>
            <person name="Chain P."/>
            <person name="Cowie A."/>
            <person name="Davis R.W."/>
            <person name="Dreano S."/>
            <person name="Federspiel N.A."/>
            <person name="Fisher R.F."/>
            <person name="Gloux S."/>
            <person name="Godrie T."/>
            <person name="Goffeau A."/>
            <person name="Golding B."/>
            <person name="Gouzy J."/>
            <person name="Gurjal M."/>
            <person name="Hernandez-Lucas I."/>
            <person name="Hong A."/>
            <person name="Huizar L."/>
            <person name="Hyman R.W."/>
            <person name="Jones T."/>
            <person name="Kahn D."/>
            <person name="Kahn M.L."/>
            <person name="Kalman S."/>
            <person name="Keating D.H."/>
            <person name="Kiss E."/>
            <person name="Komp C."/>
            <person name="Lelaure V."/>
            <person name="Masuy D."/>
            <person name="Palm C."/>
            <person name="Peck M.C."/>
            <person name="Pohl T.M."/>
            <person name="Portetelle D."/>
            <person name="Purnelle B."/>
            <person name="Ramsperger U."/>
            <person name="Surzycki R."/>
            <person name="Thebault P."/>
            <person name="Vandenbol M."/>
            <person name="Vorhoelter F.J."/>
            <person name="Weidner S."/>
            <person name="Wells D.H."/>
            <person name="Wong K."/>
            <person name="Yeh K.-C."/>
            <person name="Batut J."/>
        </authorList>
    </citation>
    <scope>NUCLEOTIDE SEQUENCE [LARGE SCALE GENOMIC DNA]</scope>
    <source>
        <strain>1021</strain>
    </source>
</reference>
<dbReference type="EMBL" id="AL591688">
    <property type="protein sequence ID" value="CAC46065.1"/>
    <property type="molecule type" value="Genomic_DNA"/>
</dbReference>
<dbReference type="RefSeq" id="NP_385592.1">
    <property type="nucleotide sequence ID" value="NC_003047.1"/>
</dbReference>
<dbReference type="SMR" id="Q92Q63"/>
<dbReference type="EnsemblBacteria" id="CAC46065">
    <property type="protein sequence ID" value="CAC46065"/>
    <property type="gene ID" value="SMc02110"/>
</dbReference>
<dbReference type="KEGG" id="sme:SMc02110"/>
<dbReference type="PATRIC" id="fig|266834.11.peg.2906"/>
<dbReference type="eggNOG" id="COG2127">
    <property type="taxonomic scope" value="Bacteria"/>
</dbReference>
<dbReference type="HOGENOM" id="CLU_134358_0_0_5"/>
<dbReference type="OrthoDB" id="9796121at2"/>
<dbReference type="Proteomes" id="UP000001976">
    <property type="component" value="Chromosome"/>
</dbReference>
<dbReference type="GO" id="GO:0030163">
    <property type="term" value="P:protein catabolic process"/>
    <property type="evidence" value="ECO:0007669"/>
    <property type="project" value="InterPro"/>
</dbReference>
<dbReference type="GO" id="GO:0006508">
    <property type="term" value="P:proteolysis"/>
    <property type="evidence" value="ECO:0007669"/>
    <property type="project" value="UniProtKB-UniRule"/>
</dbReference>
<dbReference type="FunFam" id="3.30.1390.10:FF:000002">
    <property type="entry name" value="ATP-dependent Clp protease adapter protein ClpS"/>
    <property type="match status" value="1"/>
</dbReference>
<dbReference type="Gene3D" id="3.30.1390.10">
    <property type="match status" value="1"/>
</dbReference>
<dbReference type="HAMAP" id="MF_00302">
    <property type="entry name" value="ClpS"/>
    <property type="match status" value="1"/>
</dbReference>
<dbReference type="InterPro" id="IPR022935">
    <property type="entry name" value="ClpS"/>
</dbReference>
<dbReference type="InterPro" id="IPR003769">
    <property type="entry name" value="ClpS_core"/>
</dbReference>
<dbReference type="InterPro" id="IPR014719">
    <property type="entry name" value="Ribosomal_bL12_C/ClpS-like"/>
</dbReference>
<dbReference type="NCBIfam" id="NF000669">
    <property type="entry name" value="PRK00033.1-2"/>
    <property type="match status" value="1"/>
</dbReference>
<dbReference type="NCBIfam" id="NF000672">
    <property type="entry name" value="PRK00033.1-5"/>
    <property type="match status" value="1"/>
</dbReference>
<dbReference type="PANTHER" id="PTHR33473:SF19">
    <property type="entry name" value="ATP-DEPENDENT CLP PROTEASE ADAPTER PROTEIN CLPS"/>
    <property type="match status" value="1"/>
</dbReference>
<dbReference type="PANTHER" id="PTHR33473">
    <property type="entry name" value="ATP-DEPENDENT CLP PROTEASE ADAPTER PROTEIN CLPS1, CHLOROPLASTIC"/>
    <property type="match status" value="1"/>
</dbReference>
<dbReference type="Pfam" id="PF02617">
    <property type="entry name" value="ClpS"/>
    <property type="match status" value="1"/>
</dbReference>
<dbReference type="SUPFAM" id="SSF54736">
    <property type="entry name" value="ClpS-like"/>
    <property type="match status" value="1"/>
</dbReference>